<reference key="1">
    <citation type="journal article" date="2005" name="Science">
        <title>The transcriptional landscape of the mammalian genome.</title>
        <authorList>
            <person name="Carninci P."/>
            <person name="Kasukawa T."/>
            <person name="Katayama S."/>
            <person name="Gough J."/>
            <person name="Frith M.C."/>
            <person name="Maeda N."/>
            <person name="Oyama R."/>
            <person name="Ravasi T."/>
            <person name="Lenhard B."/>
            <person name="Wells C."/>
            <person name="Kodzius R."/>
            <person name="Shimokawa K."/>
            <person name="Bajic V.B."/>
            <person name="Brenner S.E."/>
            <person name="Batalov S."/>
            <person name="Forrest A.R."/>
            <person name="Zavolan M."/>
            <person name="Davis M.J."/>
            <person name="Wilming L.G."/>
            <person name="Aidinis V."/>
            <person name="Allen J.E."/>
            <person name="Ambesi-Impiombato A."/>
            <person name="Apweiler R."/>
            <person name="Aturaliya R.N."/>
            <person name="Bailey T.L."/>
            <person name="Bansal M."/>
            <person name="Baxter L."/>
            <person name="Beisel K.W."/>
            <person name="Bersano T."/>
            <person name="Bono H."/>
            <person name="Chalk A.M."/>
            <person name="Chiu K.P."/>
            <person name="Choudhary V."/>
            <person name="Christoffels A."/>
            <person name="Clutterbuck D.R."/>
            <person name="Crowe M.L."/>
            <person name="Dalla E."/>
            <person name="Dalrymple B.P."/>
            <person name="de Bono B."/>
            <person name="Della Gatta G."/>
            <person name="di Bernardo D."/>
            <person name="Down T."/>
            <person name="Engstrom P."/>
            <person name="Fagiolini M."/>
            <person name="Faulkner G."/>
            <person name="Fletcher C.F."/>
            <person name="Fukushima T."/>
            <person name="Furuno M."/>
            <person name="Futaki S."/>
            <person name="Gariboldi M."/>
            <person name="Georgii-Hemming P."/>
            <person name="Gingeras T.R."/>
            <person name="Gojobori T."/>
            <person name="Green R.E."/>
            <person name="Gustincich S."/>
            <person name="Harbers M."/>
            <person name="Hayashi Y."/>
            <person name="Hensch T.K."/>
            <person name="Hirokawa N."/>
            <person name="Hill D."/>
            <person name="Huminiecki L."/>
            <person name="Iacono M."/>
            <person name="Ikeo K."/>
            <person name="Iwama A."/>
            <person name="Ishikawa T."/>
            <person name="Jakt M."/>
            <person name="Kanapin A."/>
            <person name="Katoh M."/>
            <person name="Kawasawa Y."/>
            <person name="Kelso J."/>
            <person name="Kitamura H."/>
            <person name="Kitano H."/>
            <person name="Kollias G."/>
            <person name="Krishnan S.P."/>
            <person name="Kruger A."/>
            <person name="Kummerfeld S.K."/>
            <person name="Kurochkin I.V."/>
            <person name="Lareau L.F."/>
            <person name="Lazarevic D."/>
            <person name="Lipovich L."/>
            <person name="Liu J."/>
            <person name="Liuni S."/>
            <person name="McWilliam S."/>
            <person name="Madan Babu M."/>
            <person name="Madera M."/>
            <person name="Marchionni L."/>
            <person name="Matsuda H."/>
            <person name="Matsuzawa S."/>
            <person name="Miki H."/>
            <person name="Mignone F."/>
            <person name="Miyake S."/>
            <person name="Morris K."/>
            <person name="Mottagui-Tabar S."/>
            <person name="Mulder N."/>
            <person name="Nakano N."/>
            <person name="Nakauchi H."/>
            <person name="Ng P."/>
            <person name="Nilsson R."/>
            <person name="Nishiguchi S."/>
            <person name="Nishikawa S."/>
            <person name="Nori F."/>
            <person name="Ohara O."/>
            <person name="Okazaki Y."/>
            <person name="Orlando V."/>
            <person name="Pang K.C."/>
            <person name="Pavan W.J."/>
            <person name="Pavesi G."/>
            <person name="Pesole G."/>
            <person name="Petrovsky N."/>
            <person name="Piazza S."/>
            <person name="Reed J."/>
            <person name="Reid J.F."/>
            <person name="Ring B.Z."/>
            <person name="Ringwald M."/>
            <person name="Rost B."/>
            <person name="Ruan Y."/>
            <person name="Salzberg S.L."/>
            <person name="Sandelin A."/>
            <person name="Schneider C."/>
            <person name="Schoenbach C."/>
            <person name="Sekiguchi K."/>
            <person name="Semple C.A."/>
            <person name="Seno S."/>
            <person name="Sessa L."/>
            <person name="Sheng Y."/>
            <person name="Shibata Y."/>
            <person name="Shimada H."/>
            <person name="Shimada K."/>
            <person name="Silva D."/>
            <person name="Sinclair B."/>
            <person name="Sperling S."/>
            <person name="Stupka E."/>
            <person name="Sugiura K."/>
            <person name="Sultana R."/>
            <person name="Takenaka Y."/>
            <person name="Taki K."/>
            <person name="Tammoja K."/>
            <person name="Tan S.L."/>
            <person name="Tang S."/>
            <person name="Taylor M.S."/>
            <person name="Tegner J."/>
            <person name="Teichmann S.A."/>
            <person name="Ueda H.R."/>
            <person name="van Nimwegen E."/>
            <person name="Verardo R."/>
            <person name="Wei C.L."/>
            <person name="Yagi K."/>
            <person name="Yamanishi H."/>
            <person name="Zabarovsky E."/>
            <person name="Zhu S."/>
            <person name="Zimmer A."/>
            <person name="Hide W."/>
            <person name="Bult C."/>
            <person name="Grimmond S.M."/>
            <person name="Teasdale R.D."/>
            <person name="Liu E.T."/>
            <person name="Brusic V."/>
            <person name="Quackenbush J."/>
            <person name="Wahlestedt C."/>
            <person name="Mattick J.S."/>
            <person name="Hume D.A."/>
            <person name="Kai C."/>
            <person name="Sasaki D."/>
            <person name="Tomaru Y."/>
            <person name="Fukuda S."/>
            <person name="Kanamori-Katayama M."/>
            <person name="Suzuki M."/>
            <person name="Aoki J."/>
            <person name="Arakawa T."/>
            <person name="Iida J."/>
            <person name="Imamura K."/>
            <person name="Itoh M."/>
            <person name="Kato T."/>
            <person name="Kawaji H."/>
            <person name="Kawagashira N."/>
            <person name="Kawashima T."/>
            <person name="Kojima M."/>
            <person name="Kondo S."/>
            <person name="Konno H."/>
            <person name="Nakano K."/>
            <person name="Ninomiya N."/>
            <person name="Nishio T."/>
            <person name="Okada M."/>
            <person name="Plessy C."/>
            <person name="Shibata K."/>
            <person name="Shiraki T."/>
            <person name="Suzuki S."/>
            <person name="Tagami M."/>
            <person name="Waki K."/>
            <person name="Watahiki A."/>
            <person name="Okamura-Oho Y."/>
            <person name="Suzuki H."/>
            <person name="Kawai J."/>
            <person name="Hayashizaki Y."/>
        </authorList>
    </citation>
    <scope>NUCLEOTIDE SEQUENCE [LARGE SCALE MRNA]</scope>
    <source>
        <strain>C57BL/6J</strain>
        <strain>NOD</strain>
        <tissue>Heart</tissue>
        <tissue>Thymus</tissue>
    </source>
</reference>
<reference key="2">
    <citation type="journal article" date="2004" name="Genome Res.">
        <title>The status, quality, and expansion of the NIH full-length cDNA project: the Mammalian Gene Collection (MGC).</title>
        <authorList>
            <consortium name="The MGC Project Team"/>
        </authorList>
    </citation>
    <scope>NUCLEOTIDE SEQUENCE [LARGE SCALE MRNA]</scope>
    <source>
        <strain>Czech II</strain>
        <tissue>Mammary gland</tissue>
    </source>
</reference>
<reference key="3">
    <citation type="journal article" date="2017" name="Oncotarget">
        <title>Loss of digestive organ expansion factor (Diexf) reveals an essential role during murine embryonic development that is independent of p53.</title>
        <authorList>
            <person name="Aryal N.K."/>
            <person name="Wasylishen A.R."/>
            <person name="Pant V."/>
            <person name="Riley-Croce M."/>
            <person name="Lozano G."/>
        </authorList>
    </citation>
    <scope>FUNCTION</scope>
    <scope>DISRUPTION PHENOTYPE</scope>
    <scope>TISSUE SPECIFICITY</scope>
</reference>
<reference key="4">
    <citation type="journal article" date="2020" name="Sci. China Life Sci.">
        <title>Ribosome biogenesis gene DEF/UTP25 is essential for liver homeostasis and regeneration.</title>
        <authorList>
            <person name="Huang W."/>
            <person name="Chen F."/>
            <person name="Ma Q."/>
            <person name="Xin J."/>
            <person name="Li J."/>
            <person name="Chen J."/>
            <person name="Zhou B."/>
            <person name="Chen M."/>
            <person name="Li J."/>
            <person name="Peng J."/>
        </authorList>
    </citation>
    <scope>FUNCTION</scope>
    <scope>DISRUPTION PHENOTYPE</scope>
    <scope>TISSUE SPECIFICITY</scope>
</reference>
<name>UTP25_MOUSE</name>
<gene>
    <name evidence="7" type="primary">Utp25</name>
    <name type="synonym">Def</name>
    <name type="synonym">Diexf</name>
</gene>
<protein>
    <recommendedName>
        <fullName>U3 small nucleolar RNA-associated protein 25 homolog</fullName>
    </recommendedName>
    <alternativeName>
        <fullName>Digestive organ expansion factor homolog</fullName>
    </alternativeName>
    <alternativeName>
        <fullName>UTP25 small subunit processor component</fullName>
    </alternativeName>
</protein>
<accession>Q8BTT6</accession>
<accession>Q8BWJ1</accession>
<accession>Q8VEC2</accession>
<sequence>MGKRRNRGRSQMLSTMTKKQKKHLRDFGEEHPFYDRVSKKEAKPQICQLPESSDSSHSESESESEQEHVSGYHRLLATLKNVSEEEEEEEEEEEEEEEEEEEEEEEEEDDSAVGDAEMNEEAGSEDGSVGEAAVSEAAEEAAETQEHMSLADNSKEKDGEEPPGVSQKSSEEFTDVKHESLFSLETNFLEEDSGGSCSQRPSQDPFQQHVNKELKEKEIQAAASSPPATQQLKWPVLGHLVFSSKFQKTETFKPPKDIDLKLLHLQKPLESTWAKTNSQFLSGPQKSNSSFTPLQKELFLIMNSYRDLFYPERTALKNGEEVRHVYCLHAINHVLKANAQVLANNSRRRSQKLGVGEDDDFRDQGLTRPKVLIVVPFREAALRVVQLFISLLEGDSKKKIIVSNKKRFQGEYGSDPEERPPNLKRPEDYEAVFVGNIDDHFRIGVAILQRSIRLYAPFYSSDILIASPLGLRTIIGGEGEKKRDFDFLSSVELLIIDQADIYLMQNWEHVLHLMNHMNLLPLDSHGVDFSRVRMWSLNNWSKYYRQTLLFGALQDAQINSVFNKHCINAQGQVAVRNVPMTGSISHVLVQLPHVFQRMEAQDLSSVIDARFHFFINKILPQYRDAVMSHTLIYVPSYFDFVRLRNYFKKEELNFTHICEYTQKSGISRARHFFLQGEKQFLLLTERFHFYKRYTIKGIRNLIFYELPTYPHFYSEVCNMLRATSRGEEATWTCTVLYSKYDAQRLAAVVGVERAAQMLQSPKNVHLFVTGEK</sequence>
<proteinExistence type="evidence at protein level"/>
<evidence type="ECO:0000250" key="1">
    <source>
        <dbReference type="UniProtKB" id="Q68CQ4"/>
    </source>
</evidence>
<evidence type="ECO:0000250" key="2">
    <source>
        <dbReference type="UniProtKB" id="Q6PEH4"/>
    </source>
</evidence>
<evidence type="ECO:0000256" key="3">
    <source>
        <dbReference type="SAM" id="MobiDB-lite"/>
    </source>
</evidence>
<evidence type="ECO:0000269" key="4">
    <source>
    </source>
</evidence>
<evidence type="ECO:0000269" key="5">
    <source>
    </source>
</evidence>
<evidence type="ECO:0000305" key="6"/>
<evidence type="ECO:0000312" key="7">
    <source>
        <dbReference type="MGI" id="MGI:2138080"/>
    </source>
</evidence>
<feature type="chain" id="PRO_0000254150" description="U3 small nucleolar RNA-associated protein 25 homolog">
    <location>
        <begin position="1"/>
        <end position="772"/>
    </location>
</feature>
<feature type="region of interest" description="Promotes p53/TP53 degradation" evidence="2">
    <location>
        <begin position="1"/>
        <end position="201"/>
    </location>
</feature>
<feature type="region of interest" description="Disordered" evidence="3">
    <location>
        <begin position="1"/>
        <end position="179"/>
    </location>
</feature>
<feature type="region of interest" description="Promotes p53/TP53 degradation" evidence="2">
    <location>
        <begin position="589"/>
        <end position="651"/>
    </location>
</feature>
<feature type="region of interest" description="Represses p53/TP53 degradation" evidence="2">
    <location>
        <begin position="652"/>
        <end position="713"/>
    </location>
</feature>
<feature type="compositionally biased region" description="Basic and acidic residues" evidence="3">
    <location>
        <begin position="25"/>
        <end position="43"/>
    </location>
</feature>
<feature type="compositionally biased region" description="Basic and acidic residues" evidence="3">
    <location>
        <begin position="54"/>
        <end position="70"/>
    </location>
</feature>
<feature type="compositionally biased region" description="Acidic residues" evidence="3">
    <location>
        <begin position="84"/>
        <end position="124"/>
    </location>
</feature>
<feature type="compositionally biased region" description="Low complexity" evidence="3">
    <location>
        <begin position="127"/>
        <end position="136"/>
    </location>
</feature>
<feature type="compositionally biased region" description="Basic and acidic residues" evidence="3">
    <location>
        <begin position="169"/>
        <end position="179"/>
    </location>
</feature>
<feature type="modified residue" description="Phosphoserine" evidence="1">
    <location>
        <position position="10"/>
    </location>
</feature>
<feature type="modified residue" description="Phosphoserine" evidence="2">
    <location>
        <position position="52"/>
    </location>
</feature>
<feature type="modified residue" description="Phosphoserine" evidence="2">
    <location>
        <position position="60"/>
    </location>
</feature>
<feature type="modified residue" description="Phosphoserine" evidence="2">
    <location>
        <position position="64"/>
    </location>
</feature>
<feature type="sequence conflict" description="In Ref. 2; AAH19218." evidence="6" ref="2">
    <location>
        <begin position="84"/>
        <end position="94"/>
    </location>
</feature>
<feature type="sequence conflict" description="In Ref. 1; BAC34954." evidence="6" ref="1">
    <location>
        <begin position="84"/>
        <end position="87"/>
    </location>
</feature>
<feature type="sequence conflict" description="In Ref. 1; BAC40549." evidence="6" ref="1">
    <original>V</original>
    <variation>A</variation>
    <location>
        <position position="165"/>
    </location>
</feature>
<feature type="sequence conflict" description="In Ref. 2; AAH19218." evidence="6" ref="2">
    <original>T</original>
    <variation>M</variation>
    <location>
        <position position="249"/>
    </location>
</feature>
<feature type="sequence conflict" description="In Ref. 2; AAH19218." evidence="6" ref="2">
    <original>L</original>
    <variation>S</variation>
    <location>
        <position position="262"/>
    </location>
</feature>
<feature type="sequence conflict" description="In Ref. 2; AAH19218." evidence="6" ref="2">
    <original>A</original>
    <variation>P</variation>
    <location>
        <position position="337"/>
    </location>
</feature>
<keyword id="KW-0217">Developmental protein</keyword>
<keyword id="KW-0539">Nucleus</keyword>
<keyword id="KW-0597">Phosphoprotein</keyword>
<keyword id="KW-1185">Reference proteome</keyword>
<dbReference type="EMBL" id="AK052355">
    <property type="protein sequence ID" value="BAC34954.1"/>
    <property type="molecule type" value="mRNA"/>
</dbReference>
<dbReference type="EMBL" id="AK088756">
    <property type="protein sequence ID" value="BAC40549.1"/>
    <property type="molecule type" value="mRNA"/>
</dbReference>
<dbReference type="EMBL" id="BC019218">
    <property type="protein sequence ID" value="AAH19218.1"/>
    <property type="molecule type" value="mRNA"/>
</dbReference>
<dbReference type="RefSeq" id="NP_663390.2">
    <property type="nucleotide sequence ID" value="NM_145415.2"/>
</dbReference>
<dbReference type="BioGRID" id="229602">
    <property type="interactions" value="25"/>
</dbReference>
<dbReference type="FunCoup" id="Q8BTT6">
    <property type="interactions" value="3528"/>
</dbReference>
<dbReference type="IntAct" id="Q8BTT6">
    <property type="interactions" value="1"/>
</dbReference>
<dbReference type="MINT" id="Q8BTT6"/>
<dbReference type="STRING" id="10090.ENSMUSP00000082691"/>
<dbReference type="iPTMnet" id="Q8BTT6"/>
<dbReference type="PhosphoSitePlus" id="Q8BTT6"/>
<dbReference type="jPOST" id="Q8BTT6"/>
<dbReference type="PaxDb" id="10090-ENSMUSP00000082691"/>
<dbReference type="PeptideAtlas" id="Q8BTT6"/>
<dbReference type="ProteomicsDB" id="279868"/>
<dbReference type="Pumba" id="Q8BTT6"/>
<dbReference type="GeneID" id="215193"/>
<dbReference type="KEGG" id="mmu:215193"/>
<dbReference type="UCSC" id="uc007edw.1">
    <property type="organism name" value="mouse"/>
</dbReference>
<dbReference type="AGR" id="MGI:2138080"/>
<dbReference type="CTD" id="27042"/>
<dbReference type="MGI" id="MGI:2138080">
    <property type="gene designation" value="Utp25"/>
</dbReference>
<dbReference type="eggNOG" id="KOG2340">
    <property type="taxonomic scope" value="Eukaryota"/>
</dbReference>
<dbReference type="InParanoid" id="Q8BTT6"/>
<dbReference type="OrthoDB" id="10264378at2759"/>
<dbReference type="PhylomeDB" id="Q8BTT6"/>
<dbReference type="TreeFam" id="TF105930"/>
<dbReference type="Reactome" id="R-MMU-6791226">
    <property type="pathway name" value="Major pathway of rRNA processing in the nucleolus and cytosol"/>
</dbReference>
<dbReference type="BioGRID-ORCS" id="215193">
    <property type="hits" value="12 hits in 77 CRISPR screens"/>
</dbReference>
<dbReference type="ChiTaRS" id="Diexf">
    <property type="organism name" value="mouse"/>
</dbReference>
<dbReference type="PRO" id="PR:Q8BTT6"/>
<dbReference type="Proteomes" id="UP000000589">
    <property type="component" value="Unplaced"/>
</dbReference>
<dbReference type="RNAct" id="Q8BTT6">
    <property type="molecule type" value="protein"/>
</dbReference>
<dbReference type="GO" id="GO:0005730">
    <property type="term" value="C:nucleolus"/>
    <property type="evidence" value="ECO:0000250"/>
    <property type="project" value="UniProtKB"/>
</dbReference>
<dbReference type="GO" id="GO:0034511">
    <property type="term" value="F:U3 snoRNA binding"/>
    <property type="evidence" value="ECO:0007669"/>
    <property type="project" value="InterPro"/>
</dbReference>
<dbReference type="GO" id="GO:0048568">
    <property type="term" value="P:embryonic organ development"/>
    <property type="evidence" value="ECO:0000250"/>
    <property type="project" value="UniProtKB"/>
</dbReference>
<dbReference type="GO" id="GO:0040019">
    <property type="term" value="P:positive regulation of embryonic development"/>
    <property type="evidence" value="ECO:0000315"/>
    <property type="project" value="UniProtKB"/>
</dbReference>
<dbReference type="GO" id="GO:0030163">
    <property type="term" value="P:protein catabolic process"/>
    <property type="evidence" value="ECO:0000250"/>
    <property type="project" value="UniProtKB"/>
</dbReference>
<dbReference type="GO" id="GO:0031648">
    <property type="term" value="P:protein destabilization"/>
    <property type="evidence" value="ECO:0000250"/>
    <property type="project" value="UniProtKB"/>
</dbReference>
<dbReference type="GO" id="GO:1902570">
    <property type="term" value="P:protein localization to nucleolus"/>
    <property type="evidence" value="ECO:0000250"/>
    <property type="project" value="UniProtKB"/>
</dbReference>
<dbReference type="GO" id="GO:0006364">
    <property type="term" value="P:rRNA processing"/>
    <property type="evidence" value="ECO:0007669"/>
    <property type="project" value="InterPro"/>
</dbReference>
<dbReference type="FunFam" id="3.40.50.300:FF:000962">
    <property type="entry name" value="digestive organ expansion factor homolog"/>
    <property type="match status" value="1"/>
</dbReference>
<dbReference type="Gene3D" id="3.40.50.300">
    <property type="entry name" value="P-loop containing nucleotide triphosphate hydrolases"/>
    <property type="match status" value="1"/>
</dbReference>
<dbReference type="InterPro" id="IPR027417">
    <property type="entry name" value="P-loop_NTPase"/>
</dbReference>
<dbReference type="InterPro" id="IPR010678">
    <property type="entry name" value="UTP25"/>
</dbReference>
<dbReference type="InterPro" id="IPR053939">
    <property type="entry name" value="UTP25_C"/>
</dbReference>
<dbReference type="InterPro" id="IPR053940">
    <property type="entry name" value="UTP25_NTPase-like"/>
</dbReference>
<dbReference type="PANTHER" id="PTHR12933">
    <property type="entry name" value="ORF PROTEIN-RELATED"/>
    <property type="match status" value="1"/>
</dbReference>
<dbReference type="PANTHER" id="PTHR12933:SF0">
    <property type="entry name" value="U3 SMALL NUCLEOLAR RNA-ASSOCIATED PROTEIN 25 HOMOLOG"/>
    <property type="match status" value="1"/>
</dbReference>
<dbReference type="Pfam" id="PF06862">
    <property type="entry name" value="Utp25_C"/>
    <property type="match status" value="1"/>
</dbReference>
<dbReference type="Pfam" id="PF22916">
    <property type="entry name" value="UTP25_NTPase-like"/>
    <property type="match status" value="1"/>
</dbReference>
<dbReference type="SUPFAM" id="SSF52540">
    <property type="entry name" value="P-loop containing nucleoside triphosphate hydrolases"/>
    <property type="match status" value="1"/>
</dbReference>
<comment type="function">
    <text evidence="1 2 4 5">Component of the ribosomal small subunit processome for the biogenesis of ribosomes, functions in pre-ribosomal RNA (pre-rRNA) processing (By similarity). Essential for embryonic development in part through the regulation of p53 pathway. Controls the expansion growth of digestive organs and liver (PubMed:29262616, PubMed:32303961). Also involved in the sympathetic neuronal development (By similarity). Mediates, with CAPN3, the proteasome-independent degradation of p53/TP53 (By similarity).</text>
</comment>
<comment type="subunit">
    <text evidence="1">Interacts with CAPN3; the interaction is required for CAPN3 translocation to the nucleolus.</text>
</comment>
<comment type="subcellular location">
    <subcellularLocation>
        <location evidence="1">Nucleus</location>
        <location evidence="1">Nucleolus</location>
    </subcellularLocation>
</comment>
<comment type="tissue specificity">
    <text evidence="4">Expressed in all tissues tested: brain, small intestine, large intestine, stomach, liver, spleen, thymus, lung, kidney and testes (at protein level).</text>
</comment>
<comment type="PTM">
    <text evidence="1">Phosphorylated. Phosphorylation is required to promote p53/TP53 degradation in the nucleolus which promotes cell cycle progression and liver development.</text>
</comment>
<comment type="disruption phenotype">
    <text evidence="4 5">Mutant embryos are peri-implantation lethal at E4.5-E5.5 stages (PubMed:29262616, PubMed:32303961). Conditional knockouts in hepatocytes do not show overall differences in liver growth but suffer from liver chronic inflammation (PubMed:32303961). Hepatocytes show nuclei enlargement with nuclear vacuolization (PubMed:32303961). Animals have bile duct hyperplasia and polycystic liver (PubMed:32303961). Males die suddenly after hepatectomy due to overactive inflammatory response (PubMed:32303961).</text>
</comment>
<comment type="similarity">
    <text evidence="6">Belongs to the UTP25 family.</text>
</comment>
<organism>
    <name type="scientific">Mus musculus</name>
    <name type="common">Mouse</name>
    <dbReference type="NCBI Taxonomy" id="10090"/>
    <lineage>
        <taxon>Eukaryota</taxon>
        <taxon>Metazoa</taxon>
        <taxon>Chordata</taxon>
        <taxon>Craniata</taxon>
        <taxon>Vertebrata</taxon>
        <taxon>Euteleostomi</taxon>
        <taxon>Mammalia</taxon>
        <taxon>Eutheria</taxon>
        <taxon>Euarchontoglires</taxon>
        <taxon>Glires</taxon>
        <taxon>Rodentia</taxon>
        <taxon>Myomorpha</taxon>
        <taxon>Muroidea</taxon>
        <taxon>Muridae</taxon>
        <taxon>Murinae</taxon>
        <taxon>Mus</taxon>
        <taxon>Mus</taxon>
    </lineage>
</organism>